<gene>
    <name evidence="11" type="primary">lipl-5</name>
    <name evidence="11" type="ORF">ZK6.7</name>
</gene>
<sequence length="403" mass="45704">MWRFAVFLAAFFVQDVVGSHGDPELHMTTPQIIERWGYPAMIYTVATDDGYILEMHRIPFGKTNVTWPNGKRPVVFMQHGLLCASSDWVVNLPDQSAGFLFADAGFDVWLGNMRGNTYSMKHKDLKPSHSAFWDWSWDEMATYDLNAMINHVLEVTGQDSVYYMGHSQGTLTMFSHLSKDDGSFAKKIKKFFALAPIGSVKHIKGFLSFFANYFSLEFDGWFDIFGAGEFLPNNWAMKLAAKDICGGLKVEADLCDNVLFLIAGPESDQWNQTRVPVYATHDPAGTSTQNIVHWMQMVHHGGVPAYDWGTKTNKKKYGQANPPEYDFTAIKGTKIYLYWSDADWLADTPDVPDYLLTRLNPAIVAQNNHLPDYNHLDFTWGLRAPDDIYRPAIKLCTDDYLGK</sequence>
<evidence type="ECO:0000255" key="1"/>
<evidence type="ECO:0000255" key="2">
    <source>
        <dbReference type="PIRNR" id="PIRNR000862"/>
    </source>
</evidence>
<evidence type="ECO:0000255" key="3">
    <source>
        <dbReference type="PIRSR" id="PIRSR000862-1"/>
    </source>
</evidence>
<evidence type="ECO:0000255" key="4">
    <source>
        <dbReference type="PROSITE-ProRule" id="PRU00498"/>
    </source>
</evidence>
<evidence type="ECO:0000269" key="5">
    <source>
    </source>
</evidence>
<evidence type="ECO:0000269" key="6">
    <source>
    </source>
</evidence>
<evidence type="ECO:0000305" key="7"/>
<evidence type="ECO:0000305" key="8">
    <source>
    </source>
</evidence>
<evidence type="ECO:0000305" key="9">
    <source>
    </source>
</evidence>
<evidence type="ECO:0000312" key="10">
    <source>
        <dbReference type="Proteomes" id="UP000001940"/>
    </source>
</evidence>
<evidence type="ECO:0000312" key="11">
    <source>
        <dbReference type="WormBase" id="ZK6.7a"/>
    </source>
</evidence>
<evidence type="ECO:0000312" key="12">
    <source>
        <dbReference type="WormBase" id="ZK6.7c"/>
    </source>
</evidence>
<evidence type="ECO:0000312" key="13">
    <source>
        <dbReference type="WormBase" id="ZK6.7d"/>
    </source>
</evidence>
<accession>O61866</accession>
<accession>A0A0K3AW68</accession>
<accession>A0A0K3AYF1</accession>
<protein>
    <recommendedName>
        <fullName evidence="2">Lipase lipl-5</fullName>
        <ecNumber evidence="8 9">3.1.1.-</ecNumber>
    </recommendedName>
    <alternativeName>
        <fullName evidence="11">Lipase-like 5</fullName>
    </alternativeName>
</protein>
<feature type="signal peptide" evidence="1">
    <location>
        <begin position="1"/>
        <end position="18"/>
    </location>
</feature>
<feature type="chain" id="PRO_5004159069" description="Lipase lipl-5" evidence="1">
    <location>
        <begin position="19"/>
        <end position="403"/>
    </location>
</feature>
<feature type="active site" description="Nucleophile" evidence="3">
    <location>
        <position position="167"/>
    </location>
</feature>
<feature type="active site" description="Charge relay system" evidence="3">
    <location>
        <position position="343"/>
    </location>
</feature>
<feature type="active site" description="Charge relay system" evidence="3">
    <location>
        <position position="375"/>
    </location>
</feature>
<feature type="glycosylation site" description="N-linked (GlcNAc...) asparagine" evidence="4">
    <location>
        <position position="64"/>
    </location>
</feature>
<feature type="glycosylation site" description="N-linked (GlcNAc...) asparagine" evidence="4">
    <location>
        <position position="271"/>
    </location>
</feature>
<feature type="splice variant" id="VSP_060545" description="In isoform d." evidence="7">
    <location>
        <begin position="1"/>
        <end position="76"/>
    </location>
</feature>
<feature type="splice variant" id="VSP_060546" description="In isoform c." evidence="7">
    <location>
        <begin position="1"/>
        <end position="26"/>
    </location>
</feature>
<comment type="function">
    <text evidence="5 6">Lipase involved in lipid homeostasis (PubMed:31676440). Regulates mitochondrial lipid composition, in particular cardiolipins and coenzyme Q-9 levels, in response to nutrient availability (PubMed:31676440). Does not affect global triglyceride levels in response to nutrient availability (PubMed:31676440). However, in coelomocytes, specifically promotes triglyceride catabolism and lifespan extension in response to nutrient deprivation (PubMed:31340142).</text>
</comment>
<comment type="subcellular location">
    <subcellularLocation>
        <location evidence="5">Lysosome lumen</location>
    </subcellularLocation>
    <subcellularLocation>
        <location evidence="5">Secreted</location>
    </subcellularLocation>
    <text evidence="5">Localizes to lysosomes in coelomocytes.</text>
</comment>
<comment type="alternative products">
    <event type="alternative splicing"/>
    <isoform>
        <id>O61866-1</id>
        <name evidence="11">a</name>
        <sequence type="displayed"/>
    </isoform>
    <isoform>
        <id>O61866-2</id>
        <name evidence="12">c</name>
        <sequence type="described" ref="VSP_060546"/>
    </isoform>
    <isoform>
        <id>O61866-3</id>
        <name evidence="13">d</name>
        <sequence type="described" ref="VSP_060545"/>
    </isoform>
</comment>
<comment type="induction">
    <text evidence="5">Up-regulated by fasting.</text>
</comment>
<comment type="disruption phenotype">
    <text evidence="5">RNAi-mediated knockdown impairs triglyceride catabolism and further increases lifespan extension in response to bacteria (nutrient) deprivation.</text>
</comment>
<comment type="similarity">
    <text evidence="2">Belongs to the AB hydrolase superfamily. Lipase family.</text>
</comment>
<proteinExistence type="evidence at transcript level"/>
<reference evidence="10" key="1">
    <citation type="journal article" date="1998" name="Science">
        <title>Genome sequence of the nematode C. elegans: a platform for investigating biology.</title>
        <authorList>
            <consortium name="The C. elegans sequencing consortium"/>
        </authorList>
    </citation>
    <scope>NUCLEOTIDE SEQUENCE [LARGE SCALE GENOMIC DNA]</scope>
    <source>
        <strain evidence="10">Bristol N2</strain>
    </source>
</reference>
<reference evidence="7" key="2">
    <citation type="journal article" date="2019" name="Biochim. Biophys. Acta">
        <title>Lipase-like 5 enzyme controls mitochondrial activity in response to starvation in Caenorhabditis elegans.</title>
        <authorList>
            <person name="Macedo F."/>
            <person name="Martins G.L."/>
            <person name="Luevano-Martinez L.A."/>
            <person name="Viana G.M."/>
            <person name="Riske K.A."/>
            <person name="Inague A."/>
            <person name="Yoshinaga M.Y."/>
            <person name="Aguilaniu H."/>
            <person name="Miyamoto S."/>
            <person name="Glezer I."/>
            <person name="da Cunha F.M."/>
        </authorList>
    </citation>
    <scope>FUNCTION</scope>
</reference>
<reference evidence="7" key="3">
    <citation type="journal article" date="2019" name="Cell Rep.">
        <title>Coelomocytes Regulate Starvation-Induced Fat Catabolism and Lifespan Extension through the Lipase LIPL-5 in Caenorhabditis elegans.</title>
        <authorList>
            <person name="Buis A."/>
            <person name="Bellemin S."/>
            <person name="Goudeau J."/>
            <person name="Monnier L."/>
            <person name="Loiseau N."/>
            <person name="Guillou H."/>
            <person name="Aguilaniu H."/>
        </authorList>
    </citation>
    <scope>FUNCTION</scope>
    <scope>SUBCELLULAR LOCATION</scope>
    <scope>INDUCTION</scope>
    <scope>DISRUPTION PHENOTYPE</scope>
</reference>
<keyword id="KW-0025">Alternative splicing</keyword>
<keyword id="KW-0325">Glycoprotein</keyword>
<keyword id="KW-0378">Hydrolase</keyword>
<keyword id="KW-0442">Lipid degradation</keyword>
<keyword id="KW-0443">Lipid metabolism</keyword>
<keyword id="KW-0458">Lysosome</keyword>
<keyword id="KW-1185">Reference proteome</keyword>
<keyword id="KW-0964">Secreted</keyword>
<keyword id="KW-0732">Signal</keyword>
<organism evidence="10">
    <name type="scientific">Caenorhabditis elegans</name>
    <dbReference type="NCBI Taxonomy" id="6239"/>
    <lineage>
        <taxon>Eukaryota</taxon>
        <taxon>Metazoa</taxon>
        <taxon>Ecdysozoa</taxon>
        <taxon>Nematoda</taxon>
        <taxon>Chromadorea</taxon>
        <taxon>Rhabditida</taxon>
        <taxon>Rhabditina</taxon>
        <taxon>Rhabditomorpha</taxon>
        <taxon>Rhabditoidea</taxon>
        <taxon>Rhabditidae</taxon>
        <taxon>Peloderinae</taxon>
        <taxon>Caenorhabditis</taxon>
    </lineage>
</organism>
<name>LIPL5_CAEEL</name>
<dbReference type="EC" id="3.1.1.-" evidence="8 9"/>
<dbReference type="EMBL" id="BX284605">
    <property type="protein sequence ID" value="CCD74353.1"/>
    <property type="molecule type" value="Genomic_DNA"/>
</dbReference>
<dbReference type="EMBL" id="BX284605">
    <property type="protein sequence ID" value="CTQ86997.1"/>
    <property type="molecule type" value="Genomic_DNA"/>
</dbReference>
<dbReference type="EMBL" id="BX284605">
    <property type="protein sequence ID" value="CTQ86998.1"/>
    <property type="molecule type" value="Genomic_DNA"/>
</dbReference>
<dbReference type="PIR" id="T33198">
    <property type="entry name" value="T33198"/>
</dbReference>
<dbReference type="RefSeq" id="NP_001300298.1">
    <property type="nucleotide sequence ID" value="NM_001313369.1"/>
</dbReference>
<dbReference type="RefSeq" id="NP_001300299.1">
    <property type="nucleotide sequence ID" value="NM_001313370.1"/>
</dbReference>
<dbReference type="RefSeq" id="NP_001360404.1">
    <molecule id="O61866-3"/>
    <property type="nucleotide sequence ID" value="NM_001372991.2"/>
</dbReference>
<dbReference type="RefSeq" id="NP_001368575.1">
    <molecule id="O61866-2"/>
    <property type="nucleotide sequence ID" value="NM_001380590.1"/>
</dbReference>
<dbReference type="RefSeq" id="NP_503184.1">
    <molecule id="O61866-1"/>
    <property type="nucleotide sequence ID" value="NM_070783.5"/>
</dbReference>
<dbReference type="SMR" id="O61866"/>
<dbReference type="FunCoup" id="O61866">
    <property type="interactions" value="253"/>
</dbReference>
<dbReference type="STRING" id="6239.ZK6.7a.2"/>
<dbReference type="ESTHER" id="caeel-1llip">
    <property type="family name" value="Acidic_Lipase"/>
</dbReference>
<dbReference type="GlyCosmos" id="O61866">
    <property type="glycosylation" value="2 sites, No reported glycans"/>
</dbReference>
<dbReference type="PaxDb" id="6239-ZK6.7a"/>
<dbReference type="PeptideAtlas" id="O61866"/>
<dbReference type="EnsemblMetazoa" id="ZK6.7a.1">
    <molecule id="O61866-1"/>
    <property type="protein sequence ID" value="ZK6.7a.1"/>
    <property type="gene ID" value="WBGene00022642"/>
</dbReference>
<dbReference type="EnsemblMetazoa" id="ZK6.7c.1">
    <molecule id="O61866-2"/>
    <property type="protein sequence ID" value="ZK6.7c.1"/>
    <property type="gene ID" value="WBGene00022642"/>
</dbReference>
<dbReference type="EnsemblMetazoa" id="ZK6.7d.1">
    <molecule id="O61866-3"/>
    <property type="protein sequence ID" value="ZK6.7d.1"/>
    <property type="gene ID" value="WBGene00022642"/>
</dbReference>
<dbReference type="GeneID" id="178563"/>
<dbReference type="KEGG" id="cel:CELE_ZK6.7"/>
<dbReference type="UCSC" id="ZK6.7b">
    <molecule id="O61866-1"/>
    <property type="organism name" value="c. elegans"/>
</dbReference>
<dbReference type="AGR" id="WB:WBGene00022642"/>
<dbReference type="CTD" id="178563"/>
<dbReference type="WormBase" id="ZK6.7a">
    <molecule id="O61866-1"/>
    <property type="protein sequence ID" value="CE18444"/>
    <property type="gene ID" value="WBGene00022642"/>
    <property type="gene designation" value="lipl-5"/>
</dbReference>
<dbReference type="WormBase" id="ZK6.7c">
    <molecule id="O61866-2"/>
    <property type="protein sequence ID" value="CE50798"/>
    <property type="gene ID" value="WBGene00022642"/>
    <property type="gene designation" value="lipl-5"/>
</dbReference>
<dbReference type="WormBase" id="ZK6.7d">
    <molecule id="O61866-3"/>
    <property type="protein sequence ID" value="CE50743"/>
    <property type="gene ID" value="WBGene00022642"/>
    <property type="gene designation" value="lipl-5"/>
</dbReference>
<dbReference type="eggNOG" id="KOG2624">
    <property type="taxonomic scope" value="Eukaryota"/>
</dbReference>
<dbReference type="GeneTree" id="ENSGT00940000169551"/>
<dbReference type="HOGENOM" id="CLU_010974_0_0_1"/>
<dbReference type="InParanoid" id="O61866"/>
<dbReference type="OMA" id="FHEFNPV"/>
<dbReference type="OrthoDB" id="9974421at2759"/>
<dbReference type="PhylomeDB" id="O61866"/>
<dbReference type="PRO" id="PR:O61866"/>
<dbReference type="Proteomes" id="UP000001940">
    <property type="component" value="Chromosome V"/>
</dbReference>
<dbReference type="Bgee" id="WBGene00022642">
    <property type="expression patterns" value="Expressed in adult organism and 2 other cell types or tissues"/>
</dbReference>
<dbReference type="GO" id="GO:0005576">
    <property type="term" value="C:extracellular region"/>
    <property type="evidence" value="ECO:0007669"/>
    <property type="project" value="UniProtKB-SubCell"/>
</dbReference>
<dbReference type="GO" id="GO:0043202">
    <property type="term" value="C:lysosomal lumen"/>
    <property type="evidence" value="ECO:0007669"/>
    <property type="project" value="UniProtKB-SubCell"/>
</dbReference>
<dbReference type="GO" id="GO:0005764">
    <property type="term" value="C:lysosome"/>
    <property type="evidence" value="ECO:0000314"/>
    <property type="project" value="UniProtKB"/>
</dbReference>
<dbReference type="GO" id="GO:0016788">
    <property type="term" value="F:hydrolase activity, acting on ester bonds"/>
    <property type="evidence" value="ECO:0007669"/>
    <property type="project" value="InterPro"/>
</dbReference>
<dbReference type="GO" id="GO:0050829">
    <property type="term" value="P:defense response to Gram-negative bacterium"/>
    <property type="evidence" value="ECO:0000270"/>
    <property type="project" value="WormBase"/>
</dbReference>
<dbReference type="GO" id="GO:0055088">
    <property type="term" value="P:lipid homeostasis"/>
    <property type="evidence" value="ECO:0000315"/>
    <property type="project" value="UniProtKB"/>
</dbReference>
<dbReference type="GO" id="GO:0006629">
    <property type="term" value="P:lipid metabolic process"/>
    <property type="evidence" value="ECO:0000315"/>
    <property type="project" value="UniProtKB"/>
</dbReference>
<dbReference type="GO" id="GO:0019433">
    <property type="term" value="P:triglyceride catabolic process"/>
    <property type="evidence" value="ECO:0000315"/>
    <property type="project" value="UniProtKB"/>
</dbReference>
<dbReference type="FunFam" id="3.40.50.1820:FF:000021">
    <property type="entry name" value="Lipase"/>
    <property type="match status" value="1"/>
</dbReference>
<dbReference type="Gene3D" id="3.40.50.1820">
    <property type="entry name" value="alpha/beta hydrolase"/>
    <property type="match status" value="1"/>
</dbReference>
<dbReference type="InterPro" id="IPR029058">
    <property type="entry name" value="AB_hydrolase_fold"/>
</dbReference>
<dbReference type="InterPro" id="IPR006693">
    <property type="entry name" value="AB_hydrolase_lipase"/>
</dbReference>
<dbReference type="InterPro" id="IPR025483">
    <property type="entry name" value="Lipase_euk"/>
</dbReference>
<dbReference type="PANTHER" id="PTHR11005">
    <property type="entry name" value="LYSOSOMAL ACID LIPASE-RELATED"/>
    <property type="match status" value="1"/>
</dbReference>
<dbReference type="Pfam" id="PF04083">
    <property type="entry name" value="Abhydro_lipase"/>
    <property type="match status" value="1"/>
</dbReference>
<dbReference type="PIRSF" id="PIRSF000862">
    <property type="entry name" value="Steryl_ester_lip"/>
    <property type="match status" value="1"/>
</dbReference>
<dbReference type="SUPFAM" id="SSF53474">
    <property type="entry name" value="alpha/beta-Hydrolases"/>
    <property type="match status" value="1"/>
</dbReference>
<dbReference type="PROSITE" id="PS00120">
    <property type="entry name" value="LIPASE_SER"/>
    <property type="match status" value="1"/>
</dbReference>